<gene>
    <name type="ordered locus">RHECIAT_CH0000002</name>
</gene>
<organism>
    <name type="scientific">Rhizobium etli (strain CIAT 652)</name>
    <dbReference type="NCBI Taxonomy" id="491916"/>
    <lineage>
        <taxon>Bacteria</taxon>
        <taxon>Pseudomonadati</taxon>
        <taxon>Pseudomonadota</taxon>
        <taxon>Alphaproteobacteria</taxon>
        <taxon>Hyphomicrobiales</taxon>
        <taxon>Rhizobiaceae</taxon>
        <taxon>Rhizobium/Agrobacterium group</taxon>
        <taxon>Rhizobium</taxon>
    </lineage>
</organism>
<protein>
    <recommendedName>
        <fullName evidence="1">Putative pyruvate, phosphate dikinase regulatory protein</fullName>
        <shortName evidence="1">PPDK regulatory protein</shortName>
        <ecNumber evidence="1">2.7.11.32</ecNumber>
        <ecNumber evidence="1">2.7.4.27</ecNumber>
    </recommendedName>
</protein>
<evidence type="ECO:0000255" key="1">
    <source>
        <dbReference type="HAMAP-Rule" id="MF_00921"/>
    </source>
</evidence>
<name>PDRP_RHIE6</name>
<feature type="chain" id="PRO_1000136485" description="Putative pyruvate, phosphate dikinase regulatory protein">
    <location>
        <begin position="1"/>
        <end position="273"/>
    </location>
</feature>
<feature type="binding site" evidence="1">
    <location>
        <begin position="153"/>
        <end position="160"/>
    </location>
    <ligand>
        <name>ADP</name>
        <dbReference type="ChEBI" id="CHEBI:456216"/>
    </ligand>
</feature>
<sequence length="273" mass="30364">MENRTNFFHLHLISDSTGETLISAGRAASAQFRSAQPIEHVYPLIRNRKQLLPVLQAIDDAPGIVLYTIVDRELASLIDERCTEMGVASVNVLEPVMNAFQIYLGAPSRRRVGAQHVMNAGYFARIEALNFTMDHDDGQMPDDYNDADVVIIGISRTSKTPTSIYLANRGIKTANIPIVYGVPLPEGLLVATKPLIVCLIATTDRISQVRENRILGATQGFDREHYTDRAAISEELKYARSLCARHNWPLIDVTRRSIEETAAAIVALRPKLR</sequence>
<dbReference type="EC" id="2.7.11.32" evidence="1"/>
<dbReference type="EC" id="2.7.4.27" evidence="1"/>
<dbReference type="EMBL" id="CP001074">
    <property type="protein sequence ID" value="ACE89005.1"/>
    <property type="molecule type" value="Genomic_DNA"/>
</dbReference>
<dbReference type="SMR" id="B3PVT2"/>
<dbReference type="KEGG" id="rec:RHECIAT_CH0000002"/>
<dbReference type="eggNOG" id="COG1806">
    <property type="taxonomic scope" value="Bacteria"/>
</dbReference>
<dbReference type="HOGENOM" id="CLU_046206_2_0_5"/>
<dbReference type="Proteomes" id="UP000008817">
    <property type="component" value="Chromosome"/>
</dbReference>
<dbReference type="GO" id="GO:0043531">
    <property type="term" value="F:ADP binding"/>
    <property type="evidence" value="ECO:0007669"/>
    <property type="project" value="UniProtKB-UniRule"/>
</dbReference>
<dbReference type="GO" id="GO:0005524">
    <property type="term" value="F:ATP binding"/>
    <property type="evidence" value="ECO:0007669"/>
    <property type="project" value="InterPro"/>
</dbReference>
<dbReference type="GO" id="GO:0016776">
    <property type="term" value="F:phosphotransferase activity, phosphate group as acceptor"/>
    <property type="evidence" value="ECO:0007669"/>
    <property type="project" value="UniProtKB-UniRule"/>
</dbReference>
<dbReference type="GO" id="GO:0004674">
    <property type="term" value="F:protein serine/threonine kinase activity"/>
    <property type="evidence" value="ECO:0007669"/>
    <property type="project" value="UniProtKB-UniRule"/>
</dbReference>
<dbReference type="HAMAP" id="MF_00921">
    <property type="entry name" value="PDRP"/>
    <property type="match status" value="1"/>
</dbReference>
<dbReference type="InterPro" id="IPR005177">
    <property type="entry name" value="Kinase-pyrophosphorylase"/>
</dbReference>
<dbReference type="InterPro" id="IPR026565">
    <property type="entry name" value="PPDK_reg"/>
</dbReference>
<dbReference type="NCBIfam" id="NF003742">
    <property type="entry name" value="PRK05339.1"/>
    <property type="match status" value="1"/>
</dbReference>
<dbReference type="PANTHER" id="PTHR31756">
    <property type="entry name" value="PYRUVATE, PHOSPHATE DIKINASE REGULATORY PROTEIN 1, CHLOROPLASTIC"/>
    <property type="match status" value="1"/>
</dbReference>
<dbReference type="PANTHER" id="PTHR31756:SF3">
    <property type="entry name" value="PYRUVATE, PHOSPHATE DIKINASE REGULATORY PROTEIN 1, CHLOROPLASTIC"/>
    <property type="match status" value="1"/>
</dbReference>
<dbReference type="Pfam" id="PF03618">
    <property type="entry name" value="Kinase-PPPase"/>
    <property type="match status" value="1"/>
</dbReference>
<comment type="function">
    <text evidence="1">Bifunctional serine/threonine kinase and phosphorylase involved in the regulation of the pyruvate, phosphate dikinase (PPDK) by catalyzing its phosphorylation/dephosphorylation.</text>
</comment>
<comment type="catalytic activity">
    <reaction evidence="1">
        <text>N(tele)-phospho-L-histidyl/L-threonyl-[pyruvate, phosphate dikinase] + ADP = N(tele)-phospho-L-histidyl/O-phospho-L-threonyl-[pyruvate, phosphate dikinase] + AMP + H(+)</text>
        <dbReference type="Rhea" id="RHEA:43692"/>
        <dbReference type="Rhea" id="RHEA-COMP:10650"/>
        <dbReference type="Rhea" id="RHEA-COMP:10651"/>
        <dbReference type="ChEBI" id="CHEBI:15378"/>
        <dbReference type="ChEBI" id="CHEBI:30013"/>
        <dbReference type="ChEBI" id="CHEBI:61977"/>
        <dbReference type="ChEBI" id="CHEBI:83586"/>
        <dbReference type="ChEBI" id="CHEBI:456215"/>
        <dbReference type="ChEBI" id="CHEBI:456216"/>
        <dbReference type="EC" id="2.7.11.32"/>
    </reaction>
</comment>
<comment type="catalytic activity">
    <reaction evidence="1">
        <text>N(tele)-phospho-L-histidyl/O-phospho-L-threonyl-[pyruvate, phosphate dikinase] + phosphate + H(+) = N(tele)-phospho-L-histidyl/L-threonyl-[pyruvate, phosphate dikinase] + diphosphate</text>
        <dbReference type="Rhea" id="RHEA:43696"/>
        <dbReference type="Rhea" id="RHEA-COMP:10650"/>
        <dbReference type="Rhea" id="RHEA-COMP:10651"/>
        <dbReference type="ChEBI" id="CHEBI:15378"/>
        <dbReference type="ChEBI" id="CHEBI:30013"/>
        <dbReference type="ChEBI" id="CHEBI:33019"/>
        <dbReference type="ChEBI" id="CHEBI:43474"/>
        <dbReference type="ChEBI" id="CHEBI:61977"/>
        <dbReference type="ChEBI" id="CHEBI:83586"/>
        <dbReference type="EC" id="2.7.4.27"/>
    </reaction>
</comment>
<comment type="similarity">
    <text evidence="1">Belongs to the pyruvate, phosphate/water dikinase regulatory protein family. PDRP subfamily.</text>
</comment>
<reference key="1">
    <citation type="journal article" date="2010" name="Appl. Environ. Microbiol.">
        <title>Conserved symbiotic plasmid DNA sequences in the multireplicon pangenomic structure of Rhizobium etli.</title>
        <authorList>
            <person name="Gonzalez V."/>
            <person name="Acosta J.L."/>
            <person name="Santamaria R.I."/>
            <person name="Bustos P."/>
            <person name="Fernandez J.L."/>
            <person name="Hernandez Gonzalez I.L."/>
            <person name="Diaz R."/>
            <person name="Flores M."/>
            <person name="Palacios R."/>
            <person name="Mora J."/>
            <person name="Davila G."/>
        </authorList>
    </citation>
    <scope>NUCLEOTIDE SEQUENCE [LARGE SCALE GENOMIC DNA]</scope>
    <source>
        <strain>CIAT 652</strain>
    </source>
</reference>
<keyword id="KW-0418">Kinase</keyword>
<keyword id="KW-0547">Nucleotide-binding</keyword>
<keyword id="KW-0723">Serine/threonine-protein kinase</keyword>
<keyword id="KW-0808">Transferase</keyword>
<proteinExistence type="inferred from homology"/>
<accession>B3PVT2</accession>